<proteinExistence type="inferred from homology"/>
<feature type="signal peptide" evidence="1">
    <location>
        <begin position="1"/>
        <end position="24"/>
    </location>
</feature>
<feature type="chain" id="PRO_0000284481" description="UPF0423 protein BMEII0885">
    <location>
        <begin position="25"/>
        <end position="182"/>
    </location>
</feature>
<protein>
    <recommendedName>
        <fullName>UPF0423 protein BMEII0885</fullName>
    </recommendedName>
</protein>
<accession>Q8YBL4</accession>
<keyword id="KW-0732">Signal</keyword>
<sequence length="182" mass="19894">MKNLFRTAALMVPLSLALAYGAQAKEIPIGKPQLLGGMEIAAVYLQPIEMEPEGMMRPAKDSDVHLEADIKAAKDNTNGFAEGDWVPYLVVSYELTHLDNGKVQKGDFMPMVANDGPHYGDNVKLDGPGKYKLKLFVSPPSANQHAHFGRHVDKETGVGPWFKPVTAEYEFVYAGTGKKGAY</sequence>
<gene>
    <name type="ordered locus">BMEII0885</name>
</gene>
<evidence type="ECO:0000255" key="1"/>
<evidence type="ECO:0000305" key="2"/>
<organism>
    <name type="scientific">Brucella melitensis biotype 1 (strain ATCC 23456 / CCUG 17765 / NCTC 10094 / 16M)</name>
    <dbReference type="NCBI Taxonomy" id="224914"/>
    <lineage>
        <taxon>Bacteria</taxon>
        <taxon>Pseudomonadati</taxon>
        <taxon>Pseudomonadota</taxon>
        <taxon>Alphaproteobacteria</taxon>
        <taxon>Hyphomicrobiales</taxon>
        <taxon>Brucellaceae</taxon>
        <taxon>Brucella/Ochrobactrum group</taxon>
        <taxon>Brucella</taxon>
    </lineage>
</organism>
<comment type="similarity">
    <text evidence="2">Belongs to the UPF0423 family.</text>
</comment>
<comment type="sequence caution" evidence="2">
    <conflict type="erroneous initiation">
        <sequence resource="EMBL-CDS" id="AAL54127"/>
    </conflict>
</comment>
<name>Y885_BRUME</name>
<reference key="1">
    <citation type="journal article" date="2002" name="Proc. Natl. Acad. Sci. U.S.A.">
        <title>The genome sequence of the facultative intracellular pathogen Brucella melitensis.</title>
        <authorList>
            <person name="DelVecchio V.G."/>
            <person name="Kapatral V."/>
            <person name="Redkar R.J."/>
            <person name="Patra G."/>
            <person name="Mujer C."/>
            <person name="Los T."/>
            <person name="Ivanova N."/>
            <person name="Anderson I."/>
            <person name="Bhattacharyya A."/>
            <person name="Lykidis A."/>
            <person name="Reznik G."/>
            <person name="Jablonski L."/>
            <person name="Larsen N."/>
            <person name="D'Souza M."/>
            <person name="Bernal A."/>
            <person name="Mazur M."/>
            <person name="Goltsman E."/>
            <person name="Selkov E."/>
            <person name="Elzer P.H."/>
            <person name="Hagius S."/>
            <person name="O'Callaghan D."/>
            <person name="Letesson J.-J."/>
            <person name="Haselkorn R."/>
            <person name="Kyrpides N.C."/>
            <person name="Overbeek R."/>
        </authorList>
    </citation>
    <scope>NUCLEOTIDE SEQUENCE [LARGE SCALE GENOMIC DNA]</scope>
    <source>
        <strain>ATCC 23456 / CCUG 17765 / NCTC 10094 / 16M</strain>
    </source>
</reference>
<dbReference type="EMBL" id="AE008918">
    <property type="protein sequence ID" value="AAL54127.1"/>
    <property type="status" value="ALT_INIT"/>
    <property type="molecule type" value="Genomic_DNA"/>
</dbReference>
<dbReference type="PIR" id="AD3620">
    <property type="entry name" value="AD3620"/>
</dbReference>
<dbReference type="RefSeq" id="WP_002966226.1">
    <property type="nucleotide sequence ID" value="NZ_GG703779.1"/>
</dbReference>
<dbReference type="SMR" id="Q8YBL4"/>
<dbReference type="KEGG" id="bme:BMEII0885"/>
<dbReference type="eggNOG" id="COG3470">
    <property type="taxonomic scope" value="Bacteria"/>
</dbReference>
<dbReference type="PhylomeDB" id="Q8YBL4"/>
<dbReference type="Proteomes" id="UP000000419">
    <property type="component" value="Chromosome II"/>
</dbReference>
<dbReference type="Gene3D" id="2.60.40.2480">
    <property type="entry name" value="Periplasmic metal-binding protein Tp34-type"/>
    <property type="match status" value="1"/>
</dbReference>
<dbReference type="InterPro" id="IPR018470">
    <property type="entry name" value="Metal-bd_Tp34-typ"/>
</dbReference>
<dbReference type="InterPro" id="IPR038482">
    <property type="entry name" value="Tp34-type_sf"/>
</dbReference>
<dbReference type="Pfam" id="PF10634">
    <property type="entry name" value="Iron_transport"/>
    <property type="match status" value="1"/>
</dbReference>
<dbReference type="PIRSF" id="PIRSF017018">
    <property type="entry name" value="Tp34"/>
    <property type="match status" value="1"/>
</dbReference>